<keyword id="KW-0125">Carotenoid biosynthesis</keyword>
<keyword id="KW-1003">Cell membrane</keyword>
<keyword id="KW-0413">Isomerase</keyword>
<keyword id="KW-0472">Membrane</keyword>
<keyword id="KW-0812">Transmembrane</keyword>
<keyword id="KW-1133">Transmembrane helix</keyword>
<proteinExistence type="evidence at protein level"/>
<evidence type="ECO:0000255" key="1"/>
<evidence type="ECO:0000269" key="2">
    <source>
    </source>
</evidence>
<evidence type="ECO:0000303" key="3">
    <source>
    </source>
</evidence>
<evidence type="ECO:0000305" key="4"/>
<gene>
    <name evidence="3" type="primary">crtY</name>
    <name type="ordered locus">OE_3983R</name>
</gene>
<dbReference type="EC" id="5.5.1.19" evidence="2"/>
<dbReference type="EMBL" id="AM774415">
    <property type="protein sequence ID" value="CAP14572.1"/>
    <property type="molecule type" value="Genomic_DNA"/>
</dbReference>
<dbReference type="RefSeq" id="WP_012289440.1">
    <property type="nucleotide sequence ID" value="NC_010364.1"/>
</dbReference>
<dbReference type="EnsemblBacteria" id="CAP14572">
    <property type="protein sequence ID" value="CAP14572"/>
    <property type="gene ID" value="OE_3983R"/>
</dbReference>
<dbReference type="GeneID" id="68694704"/>
<dbReference type="KEGG" id="hsl:OE_3983R"/>
<dbReference type="HOGENOM" id="CLU_076391_0_0_2"/>
<dbReference type="UniPathway" id="UPA00802"/>
<dbReference type="Proteomes" id="UP000001321">
    <property type="component" value="Chromosome"/>
</dbReference>
<dbReference type="GO" id="GO:0005886">
    <property type="term" value="C:plasma membrane"/>
    <property type="evidence" value="ECO:0007669"/>
    <property type="project" value="UniProtKB-SubCell"/>
</dbReference>
<dbReference type="GO" id="GO:0016872">
    <property type="term" value="F:intramolecular lyase activity"/>
    <property type="evidence" value="ECO:0007669"/>
    <property type="project" value="InterPro"/>
</dbReference>
<dbReference type="GO" id="GO:0045436">
    <property type="term" value="F:lycopene beta cyclase activity"/>
    <property type="evidence" value="ECO:0000314"/>
    <property type="project" value="UniProtKB"/>
</dbReference>
<dbReference type="GO" id="GO:0016120">
    <property type="term" value="P:carotene biosynthetic process"/>
    <property type="evidence" value="ECO:0000314"/>
    <property type="project" value="UniProtKB"/>
</dbReference>
<dbReference type="GO" id="GO:0016117">
    <property type="term" value="P:carotenoid biosynthetic process"/>
    <property type="evidence" value="ECO:0007669"/>
    <property type="project" value="UniProtKB-KW"/>
</dbReference>
<dbReference type="GO" id="GO:0042574">
    <property type="term" value="P:retinal metabolic process"/>
    <property type="evidence" value="ECO:0000315"/>
    <property type="project" value="UniProtKB"/>
</dbReference>
<dbReference type="InterPro" id="IPR017825">
    <property type="entry name" value="Lycopene_cyclase_dom"/>
</dbReference>
<dbReference type="NCBIfam" id="TIGR03462">
    <property type="entry name" value="CarR_dom_SF"/>
    <property type="match status" value="2"/>
</dbReference>
<dbReference type="Pfam" id="PF18916">
    <property type="entry name" value="Lycopene_cyc"/>
    <property type="match status" value="2"/>
</dbReference>
<sequence length="237" mass="25822">MTTSYLTFLAVAVGPPLVALGVVRAARWDGDRARAAGVGILLALALSYTTPWDNYLIATGVWWYGEGTVVGRLWQMPIEEYLFVITQTLLTGLWVQALPLRPTAGFSPTRRDAVLGALAGVLVGCGGAVLLTVDATFYIGAIIAWAAPVLALQWAVGWRYLWRRRRVFAAAVLVPTLFLSAADRYAIADGIWILAGQYTTGITVLGLPIEEGAFFFVTNVFVSQGLILYAWVLARWR</sequence>
<accession>B0R753</accession>
<name>CRTY_HALS3</name>
<protein>
    <recommendedName>
        <fullName evidence="3">Lycopene beta-cyclase</fullName>
        <ecNumber evidence="2">5.5.1.19</ecNumber>
    </recommendedName>
</protein>
<reference key="1">
    <citation type="journal article" date="2008" name="Genomics">
        <title>Evolution in the laboratory: the genome of Halobacterium salinarum strain R1 compared to that of strain NRC-1.</title>
        <authorList>
            <person name="Pfeiffer F."/>
            <person name="Schuster S.C."/>
            <person name="Broicher A."/>
            <person name="Falb M."/>
            <person name="Palm P."/>
            <person name="Rodewald K."/>
            <person name="Ruepp A."/>
            <person name="Soppa J."/>
            <person name="Tittor J."/>
            <person name="Oesterhelt D."/>
        </authorList>
    </citation>
    <scope>NUCLEOTIDE SEQUENCE [LARGE SCALE GENOMIC DNA]</scope>
    <source>
        <strain>ATCC 29341 / DSM 671 / R1</strain>
    </source>
</reference>
<reference key="2">
    <citation type="journal article" date="2002" name="J. Bacteriol.">
        <title>Identification of a lycopene beta-cyclase required for bacteriorhodopsin biogenesis in the archaeon Halobacterium salinarum.</title>
        <authorList>
            <person name="Peck R.F."/>
            <person name="Johnson E.A."/>
            <person name="Krebs M.P."/>
        </authorList>
    </citation>
    <scope>FUNCTION</scope>
    <scope>CATALYTIC ACTIVITY</scope>
    <scope>ROLE IN BACTERIORHODOPSIN BIOGENESIS</scope>
    <scope>PATHWAY</scope>
    <scope>DISRUPTION PHENOTYPE</scope>
    <source>
        <strain>ATCC 29341 / DSM 671 / R1</strain>
    </source>
</reference>
<comment type="function">
    <text evidence="2">Catalyzes the cyclization of both ends of lycopene to form beta-carotene, a retinal precursor. Is required for bacteriorhodopsin biogenesis, a light-driven proton pump with a covalently bound retinal cofactor.</text>
</comment>
<comment type="catalytic activity">
    <reaction evidence="2">
        <text>a carotenoid psi-end group = a carotenoid beta-end derivative</text>
        <dbReference type="Rhea" id="RHEA:55620"/>
        <dbReference type="ChEBI" id="CHEBI:139114"/>
        <dbReference type="ChEBI" id="CHEBI:139120"/>
        <dbReference type="EC" id="5.5.1.19"/>
    </reaction>
    <physiologicalReaction direction="left-to-right" evidence="2">
        <dbReference type="Rhea" id="RHEA:55621"/>
    </physiologicalReaction>
</comment>
<comment type="catalytic activity">
    <reaction evidence="2">
        <text>all-trans-lycopene = gamma-carotene</text>
        <dbReference type="Rhea" id="RHEA:32219"/>
        <dbReference type="ChEBI" id="CHEBI:15948"/>
        <dbReference type="ChEBI" id="CHEBI:27740"/>
        <dbReference type="EC" id="5.5.1.19"/>
    </reaction>
    <physiologicalReaction direction="left-to-right" evidence="2">
        <dbReference type="Rhea" id="RHEA:32220"/>
    </physiologicalReaction>
</comment>
<comment type="catalytic activity">
    <reaction evidence="2">
        <text>gamma-carotene = all-trans-beta-carotene</text>
        <dbReference type="Rhea" id="RHEA:32239"/>
        <dbReference type="ChEBI" id="CHEBI:17579"/>
        <dbReference type="ChEBI" id="CHEBI:27740"/>
        <dbReference type="EC" id="5.5.1.19"/>
    </reaction>
    <physiologicalReaction direction="left-to-right" evidence="2">
        <dbReference type="Rhea" id="RHEA:32240"/>
    </physiologicalReaction>
</comment>
<comment type="pathway">
    <text evidence="2">Carotenoid biosynthesis; beta-carotene biosynthesis.</text>
</comment>
<comment type="subcellular location">
    <subcellularLocation>
        <location evidence="4">Cell membrane</location>
        <topology evidence="4">Multi-pass membrane protein</topology>
    </subcellularLocation>
</comment>
<comment type="disruption phenotype">
    <text evidence="2">Strains lacking this gene show undetectable levels of bacteriorhodopsin, retinal, and beta-carotene and accumulation of lycopene to high levels.</text>
</comment>
<comment type="similarity">
    <text evidence="4">Belongs to the lycopene beta-cyclase family.</text>
</comment>
<feature type="chain" id="PRO_0000408500" description="Lycopene beta-cyclase">
    <location>
        <begin position="1"/>
        <end position="237"/>
    </location>
</feature>
<feature type="transmembrane region" description="Helical" evidence="1">
    <location>
        <begin position="3"/>
        <end position="23"/>
    </location>
</feature>
<feature type="transmembrane region" description="Helical" evidence="1">
    <location>
        <begin position="38"/>
        <end position="58"/>
    </location>
</feature>
<feature type="transmembrane region" description="Helical" evidence="1">
    <location>
        <begin position="80"/>
        <end position="100"/>
    </location>
</feature>
<feature type="transmembrane region" description="Helical" evidence="1">
    <location>
        <begin position="113"/>
        <end position="133"/>
    </location>
</feature>
<feature type="transmembrane region" description="Helical" evidence="1">
    <location>
        <begin position="137"/>
        <end position="157"/>
    </location>
</feature>
<feature type="transmembrane region" description="Helical" evidence="1">
    <location>
        <begin position="170"/>
        <end position="192"/>
    </location>
</feature>
<feature type="transmembrane region" description="Helical" evidence="1">
    <location>
        <begin position="213"/>
        <end position="233"/>
    </location>
</feature>
<organism>
    <name type="scientific">Halobacterium salinarum (strain ATCC 29341 / DSM 671 / R1)</name>
    <dbReference type="NCBI Taxonomy" id="478009"/>
    <lineage>
        <taxon>Archaea</taxon>
        <taxon>Methanobacteriati</taxon>
        <taxon>Methanobacteriota</taxon>
        <taxon>Stenosarchaea group</taxon>
        <taxon>Halobacteria</taxon>
        <taxon>Halobacteriales</taxon>
        <taxon>Halobacteriaceae</taxon>
        <taxon>Halobacterium</taxon>
        <taxon>Halobacterium salinarum NRC-34001</taxon>
    </lineage>
</organism>